<evidence type="ECO:0000255" key="1">
    <source>
        <dbReference type="HAMAP-Rule" id="MF_01317"/>
    </source>
</evidence>
<comment type="function">
    <text evidence="1">One of the components of the core complex of photosystem II (PSII). PSII is a light-driven water:plastoquinone oxidoreductase that uses light energy to abstract electrons from H(2)O, generating O(2) and a proton gradient subsequently used for ATP formation. It consists of a core antenna complex that captures photons, and an electron transfer chain that converts photonic excitation into a charge separation. This subunit is found at the monomer-monomer interface and is required for correct PSII assembly and/or dimerization.</text>
</comment>
<comment type="subunit">
    <text evidence="1">PSII is composed of 1 copy each of membrane proteins PsbA, PsbB, PsbC, PsbD, PsbE, PsbF, PsbH, PsbI, PsbJ, PsbK, PsbL, PsbM, PsbT, PsbX, PsbY, PsbZ, Psb30/Ycf12, at least 3 peripheral proteins of the oxygen-evolving complex and a large number of cofactors. It forms dimeric complexes.</text>
</comment>
<comment type="subcellular location">
    <subcellularLocation>
        <location evidence="1">Plastid</location>
        <location evidence="1">Chloroplast thylakoid membrane</location>
        <topology evidence="1">Single-pass membrane protein</topology>
    </subcellularLocation>
</comment>
<comment type="similarity">
    <text evidence="1">Belongs to the PsbL family.</text>
</comment>
<organism>
    <name type="scientific">Trieres chinensis</name>
    <name type="common">Marine centric diatom</name>
    <name type="synonym">Odontella sinensis</name>
    <dbReference type="NCBI Taxonomy" id="1514140"/>
    <lineage>
        <taxon>Eukaryota</taxon>
        <taxon>Sar</taxon>
        <taxon>Stramenopiles</taxon>
        <taxon>Ochrophyta</taxon>
        <taxon>Bacillariophyta</taxon>
        <taxon>Mediophyceae</taxon>
        <taxon>Biddulphiophycidae</taxon>
        <taxon>Eupodiscales</taxon>
        <taxon>Parodontellaceae</taxon>
        <taxon>Trieres</taxon>
    </lineage>
</organism>
<geneLocation type="chloroplast"/>
<keyword id="KW-0150">Chloroplast</keyword>
<keyword id="KW-0472">Membrane</keyword>
<keyword id="KW-0602">Photosynthesis</keyword>
<keyword id="KW-0604">Photosystem II</keyword>
<keyword id="KW-0934">Plastid</keyword>
<keyword id="KW-0674">Reaction center</keyword>
<keyword id="KW-0793">Thylakoid</keyword>
<keyword id="KW-0812">Transmembrane</keyword>
<keyword id="KW-1133">Transmembrane helix</keyword>
<name>PSBL_TRICV</name>
<gene>
    <name evidence="1" type="primary">psbL</name>
</gene>
<protein>
    <recommendedName>
        <fullName evidence="1">Photosystem II reaction center protein L</fullName>
        <shortName evidence="1">PSII-L</shortName>
    </recommendedName>
</protein>
<proteinExistence type="inferred from homology"/>
<sequence>MTGPNPNKQAVELNRTSLYWGLLLIFVLAVLFSSYFFN</sequence>
<feature type="chain" id="PRO_0000219751" description="Photosystem II reaction center protein L">
    <location>
        <begin position="1"/>
        <end position="38"/>
    </location>
</feature>
<feature type="transmembrane region" description="Helical" evidence="1">
    <location>
        <begin position="17"/>
        <end position="37"/>
    </location>
</feature>
<dbReference type="EMBL" id="Z67753">
    <property type="protein sequence ID" value="CAA91712.1"/>
    <property type="molecule type" value="Genomic_DNA"/>
</dbReference>
<dbReference type="PIR" id="S78339">
    <property type="entry name" value="S78339"/>
</dbReference>
<dbReference type="RefSeq" id="NP_043680.1">
    <property type="nucleotide sequence ID" value="NC_001713.1"/>
</dbReference>
<dbReference type="SMR" id="P49514"/>
<dbReference type="GeneID" id="801715"/>
<dbReference type="GO" id="GO:0009535">
    <property type="term" value="C:chloroplast thylakoid membrane"/>
    <property type="evidence" value="ECO:0007669"/>
    <property type="project" value="UniProtKB-SubCell"/>
</dbReference>
<dbReference type="GO" id="GO:0009539">
    <property type="term" value="C:photosystem II reaction center"/>
    <property type="evidence" value="ECO:0007669"/>
    <property type="project" value="InterPro"/>
</dbReference>
<dbReference type="GO" id="GO:0015979">
    <property type="term" value="P:photosynthesis"/>
    <property type="evidence" value="ECO:0007669"/>
    <property type="project" value="UniProtKB-UniRule"/>
</dbReference>
<dbReference type="HAMAP" id="MF_01317">
    <property type="entry name" value="PSII_PsbL"/>
    <property type="match status" value="1"/>
</dbReference>
<dbReference type="InterPro" id="IPR003372">
    <property type="entry name" value="PSII_PsbL"/>
</dbReference>
<dbReference type="InterPro" id="IPR037266">
    <property type="entry name" value="PSII_PsbL_sf"/>
</dbReference>
<dbReference type="NCBIfam" id="NF001972">
    <property type="entry name" value="PRK00753.1"/>
    <property type="match status" value="1"/>
</dbReference>
<dbReference type="Pfam" id="PF02419">
    <property type="entry name" value="PsbL"/>
    <property type="match status" value="1"/>
</dbReference>
<dbReference type="SUPFAM" id="SSF161017">
    <property type="entry name" value="Photosystem II reaction center protein L, PsbL"/>
    <property type="match status" value="1"/>
</dbReference>
<reference key="1">
    <citation type="journal article" date="1995" name="Plant Mol. Biol. Rep.">
        <title>The chloroplast genome of a chlorophyll a+c-containing alga, Odontella sinensis.</title>
        <authorList>
            <person name="Kowallik K.V."/>
            <person name="Stoebe B."/>
            <person name="Schaffran I."/>
            <person name="Kroth-Pancic P."/>
            <person name="Freier U."/>
        </authorList>
    </citation>
    <scope>NUCLEOTIDE SEQUENCE [LARGE SCALE GENOMIC DNA]</scope>
</reference>
<accession>P49514</accession>